<sequence length="165" mass="19177">MEKETKEKIEKTVIEILSESDMKEITEFKVRKLASEKLAIDLSEKSHKAFVRSVVEKFLDEERAREYENSQVNKEEEDGDKDCGKGNKEFDDDGDLIICRLSDKRRVTIQEFKGKSLVSIREYYKKDGKELPTSKGISLTDEQWSTFKKNMPAIENAVKKMESRV</sequence>
<comment type="function">
    <text evidence="1">General coactivator that functions cooperatively with TAFs and mediates functional interactions between upstream activators and the general transcriptional machinery. Binds single-stranded DNA (By similarity).</text>
</comment>
<comment type="interaction">
    <interactant intactId="EBI-2112322">
        <id>O65155</id>
    </interactant>
    <interactant intactId="EBI-2112286">
        <id>O65154</id>
        <label>KIWI</label>
    </interactant>
    <organismsDiffer>false</organismsDiffer>
    <experiments>9</experiments>
</comment>
<comment type="subcellular location">
    <subcellularLocation>
        <location evidence="1">Nucleus</location>
    </subcellularLocation>
</comment>
<comment type="similarity">
    <text evidence="4">Belongs to the transcriptional coactivator PC4 family.</text>
</comment>
<name>KELP_ARATH</name>
<keyword id="KW-0010">Activator</keyword>
<keyword id="KW-0238">DNA-binding</keyword>
<keyword id="KW-0539">Nucleus</keyword>
<keyword id="KW-1185">Reference proteome</keyword>
<keyword id="KW-0804">Transcription</keyword>
<keyword id="KW-0805">Transcription regulation</keyword>
<proteinExistence type="evidence at protein level"/>
<gene>
    <name type="primary">KELP</name>
    <name type="ordered locus">At4g10920</name>
    <name type="ORF">F25I24.130</name>
    <name type="ORF">F8M12.6</name>
</gene>
<accession>O65155</accession>
<reference key="1">
    <citation type="journal article" date="1998" name="Plant J.">
        <title>Isolation of putative plant transcriptional coactivators using a modified two-hybrid system incorporating a GFP reporter gene.</title>
        <authorList>
            <person name="Cormack R.S."/>
            <person name="Hahlbrock K."/>
            <person name="Somssich I.E."/>
        </authorList>
    </citation>
    <scope>NUCLEOTIDE SEQUENCE [MRNA]</scope>
    <source>
        <strain>cv. Columbia</strain>
    </source>
</reference>
<reference key="2">
    <citation type="journal article" date="1999" name="Nature">
        <title>Sequence and analysis of chromosome 4 of the plant Arabidopsis thaliana.</title>
        <authorList>
            <person name="Mayer K.F.X."/>
            <person name="Schueller C."/>
            <person name="Wambutt R."/>
            <person name="Murphy G."/>
            <person name="Volckaert G."/>
            <person name="Pohl T."/>
            <person name="Duesterhoeft A."/>
            <person name="Stiekema W."/>
            <person name="Entian K.-D."/>
            <person name="Terryn N."/>
            <person name="Harris B."/>
            <person name="Ansorge W."/>
            <person name="Brandt P."/>
            <person name="Grivell L.A."/>
            <person name="Rieger M."/>
            <person name="Weichselgartner M."/>
            <person name="de Simone V."/>
            <person name="Obermaier B."/>
            <person name="Mache R."/>
            <person name="Mueller M."/>
            <person name="Kreis M."/>
            <person name="Delseny M."/>
            <person name="Puigdomenech P."/>
            <person name="Watson M."/>
            <person name="Schmidtheini T."/>
            <person name="Reichert B."/>
            <person name="Portetelle D."/>
            <person name="Perez-Alonso M."/>
            <person name="Boutry M."/>
            <person name="Bancroft I."/>
            <person name="Vos P."/>
            <person name="Hoheisel J."/>
            <person name="Zimmermann W."/>
            <person name="Wedler H."/>
            <person name="Ridley P."/>
            <person name="Langham S.-A."/>
            <person name="McCullagh B."/>
            <person name="Bilham L."/>
            <person name="Robben J."/>
            <person name="van der Schueren J."/>
            <person name="Grymonprez B."/>
            <person name="Chuang Y.-J."/>
            <person name="Vandenbussche F."/>
            <person name="Braeken M."/>
            <person name="Weltjens I."/>
            <person name="Voet M."/>
            <person name="Bastiaens I."/>
            <person name="Aert R."/>
            <person name="Defoor E."/>
            <person name="Weitzenegger T."/>
            <person name="Bothe G."/>
            <person name="Ramsperger U."/>
            <person name="Hilbert H."/>
            <person name="Braun M."/>
            <person name="Holzer E."/>
            <person name="Brandt A."/>
            <person name="Peters S."/>
            <person name="van Staveren M."/>
            <person name="Dirkse W."/>
            <person name="Mooijman P."/>
            <person name="Klein Lankhorst R."/>
            <person name="Rose M."/>
            <person name="Hauf J."/>
            <person name="Koetter P."/>
            <person name="Berneiser S."/>
            <person name="Hempel S."/>
            <person name="Feldpausch M."/>
            <person name="Lamberth S."/>
            <person name="Van den Daele H."/>
            <person name="De Keyser A."/>
            <person name="Buysshaert C."/>
            <person name="Gielen J."/>
            <person name="Villarroel R."/>
            <person name="De Clercq R."/>
            <person name="van Montagu M."/>
            <person name="Rogers J."/>
            <person name="Cronin A."/>
            <person name="Quail M.A."/>
            <person name="Bray-Allen S."/>
            <person name="Clark L."/>
            <person name="Doggett J."/>
            <person name="Hall S."/>
            <person name="Kay M."/>
            <person name="Lennard N."/>
            <person name="McLay K."/>
            <person name="Mayes R."/>
            <person name="Pettett A."/>
            <person name="Rajandream M.A."/>
            <person name="Lyne M."/>
            <person name="Benes V."/>
            <person name="Rechmann S."/>
            <person name="Borkova D."/>
            <person name="Bloecker H."/>
            <person name="Scharfe M."/>
            <person name="Grimm M."/>
            <person name="Loehnert T.-H."/>
            <person name="Dose S."/>
            <person name="de Haan M."/>
            <person name="Maarse A.C."/>
            <person name="Schaefer M."/>
            <person name="Mueller-Auer S."/>
            <person name="Gabel C."/>
            <person name="Fuchs M."/>
            <person name="Fartmann B."/>
            <person name="Granderath K."/>
            <person name="Dauner D."/>
            <person name="Herzl A."/>
            <person name="Neumann S."/>
            <person name="Argiriou A."/>
            <person name="Vitale D."/>
            <person name="Liguori R."/>
            <person name="Piravandi E."/>
            <person name="Massenet O."/>
            <person name="Quigley F."/>
            <person name="Clabauld G."/>
            <person name="Muendlein A."/>
            <person name="Felber R."/>
            <person name="Schnabl S."/>
            <person name="Hiller R."/>
            <person name="Schmidt W."/>
            <person name="Lecharny A."/>
            <person name="Aubourg S."/>
            <person name="Chefdor F."/>
            <person name="Cooke R."/>
            <person name="Berger C."/>
            <person name="Monfort A."/>
            <person name="Casacuberta E."/>
            <person name="Gibbons T."/>
            <person name="Weber N."/>
            <person name="Vandenbol M."/>
            <person name="Bargues M."/>
            <person name="Terol J."/>
            <person name="Torres A."/>
            <person name="Perez-Perez A."/>
            <person name="Purnelle B."/>
            <person name="Bent E."/>
            <person name="Johnson S."/>
            <person name="Tacon D."/>
            <person name="Jesse T."/>
            <person name="Heijnen L."/>
            <person name="Schwarz S."/>
            <person name="Scholler P."/>
            <person name="Heber S."/>
            <person name="Francs P."/>
            <person name="Bielke C."/>
            <person name="Frishman D."/>
            <person name="Haase D."/>
            <person name="Lemcke K."/>
            <person name="Mewes H.-W."/>
            <person name="Stocker S."/>
            <person name="Zaccaria P."/>
            <person name="Bevan M."/>
            <person name="Wilson R.K."/>
            <person name="de la Bastide M."/>
            <person name="Habermann K."/>
            <person name="Parnell L."/>
            <person name="Dedhia N."/>
            <person name="Gnoj L."/>
            <person name="Schutz K."/>
            <person name="Huang E."/>
            <person name="Spiegel L."/>
            <person name="Sekhon M."/>
            <person name="Murray J."/>
            <person name="Sheet P."/>
            <person name="Cordes M."/>
            <person name="Abu-Threideh J."/>
            <person name="Stoneking T."/>
            <person name="Kalicki J."/>
            <person name="Graves T."/>
            <person name="Harmon G."/>
            <person name="Edwards J."/>
            <person name="Latreille P."/>
            <person name="Courtney L."/>
            <person name="Cloud J."/>
            <person name="Abbott A."/>
            <person name="Scott K."/>
            <person name="Johnson D."/>
            <person name="Minx P."/>
            <person name="Bentley D."/>
            <person name="Fulton B."/>
            <person name="Miller N."/>
            <person name="Greco T."/>
            <person name="Kemp K."/>
            <person name="Kramer J."/>
            <person name="Fulton L."/>
            <person name="Mardis E."/>
            <person name="Dante M."/>
            <person name="Pepin K."/>
            <person name="Hillier L.W."/>
            <person name="Nelson J."/>
            <person name="Spieth J."/>
            <person name="Ryan E."/>
            <person name="Andrews S."/>
            <person name="Geisel C."/>
            <person name="Layman D."/>
            <person name="Du H."/>
            <person name="Ali J."/>
            <person name="Berghoff A."/>
            <person name="Jones K."/>
            <person name="Drone K."/>
            <person name="Cotton M."/>
            <person name="Joshu C."/>
            <person name="Antonoiu B."/>
            <person name="Zidanic M."/>
            <person name="Strong C."/>
            <person name="Sun H."/>
            <person name="Lamar B."/>
            <person name="Yordan C."/>
            <person name="Ma P."/>
            <person name="Zhong J."/>
            <person name="Preston R."/>
            <person name="Vil D."/>
            <person name="Shekher M."/>
            <person name="Matero A."/>
            <person name="Shah R."/>
            <person name="Swaby I.K."/>
            <person name="O'Shaughnessy A."/>
            <person name="Rodriguez M."/>
            <person name="Hoffman J."/>
            <person name="Till S."/>
            <person name="Granat S."/>
            <person name="Shohdy N."/>
            <person name="Hasegawa A."/>
            <person name="Hameed A."/>
            <person name="Lodhi M."/>
            <person name="Johnson A."/>
            <person name="Chen E."/>
            <person name="Marra M.A."/>
            <person name="Martienssen R."/>
            <person name="McCombie W.R."/>
        </authorList>
    </citation>
    <scope>NUCLEOTIDE SEQUENCE [LARGE SCALE GENOMIC DNA]</scope>
    <source>
        <strain>cv. Columbia</strain>
    </source>
</reference>
<reference key="3">
    <citation type="journal article" date="2017" name="Plant J.">
        <title>Araport11: a complete reannotation of the Arabidopsis thaliana reference genome.</title>
        <authorList>
            <person name="Cheng C.Y."/>
            <person name="Krishnakumar V."/>
            <person name="Chan A.P."/>
            <person name="Thibaud-Nissen F."/>
            <person name="Schobel S."/>
            <person name="Town C.D."/>
        </authorList>
    </citation>
    <scope>GENOME REANNOTATION</scope>
    <source>
        <strain>cv. Columbia</strain>
    </source>
</reference>
<reference key="4">
    <citation type="journal article" date="2003" name="Science">
        <title>Empirical analysis of transcriptional activity in the Arabidopsis genome.</title>
        <authorList>
            <person name="Yamada K."/>
            <person name="Lim J."/>
            <person name="Dale J.M."/>
            <person name="Chen H."/>
            <person name="Shinn P."/>
            <person name="Palm C.J."/>
            <person name="Southwick A.M."/>
            <person name="Wu H.C."/>
            <person name="Kim C.J."/>
            <person name="Nguyen M."/>
            <person name="Pham P.K."/>
            <person name="Cheuk R.F."/>
            <person name="Karlin-Newmann G."/>
            <person name="Liu S.X."/>
            <person name="Lam B."/>
            <person name="Sakano H."/>
            <person name="Wu T."/>
            <person name="Yu G."/>
            <person name="Miranda M."/>
            <person name="Quach H.L."/>
            <person name="Tripp M."/>
            <person name="Chang C.H."/>
            <person name="Lee J.M."/>
            <person name="Toriumi M.J."/>
            <person name="Chan M.M."/>
            <person name="Tang C.C."/>
            <person name="Onodera C.S."/>
            <person name="Deng J.M."/>
            <person name="Akiyama K."/>
            <person name="Ansari Y."/>
            <person name="Arakawa T."/>
            <person name="Banh J."/>
            <person name="Banno F."/>
            <person name="Bowser L."/>
            <person name="Brooks S.Y."/>
            <person name="Carninci P."/>
            <person name="Chao Q."/>
            <person name="Choy N."/>
            <person name="Enju A."/>
            <person name="Goldsmith A.D."/>
            <person name="Gurjal M."/>
            <person name="Hansen N.F."/>
            <person name="Hayashizaki Y."/>
            <person name="Johnson-Hopson C."/>
            <person name="Hsuan V.W."/>
            <person name="Iida K."/>
            <person name="Karnes M."/>
            <person name="Khan S."/>
            <person name="Koesema E."/>
            <person name="Ishida J."/>
            <person name="Jiang P.X."/>
            <person name="Jones T."/>
            <person name="Kawai J."/>
            <person name="Kamiya A."/>
            <person name="Meyers C."/>
            <person name="Nakajima M."/>
            <person name="Narusaka M."/>
            <person name="Seki M."/>
            <person name="Sakurai T."/>
            <person name="Satou M."/>
            <person name="Tamse R."/>
            <person name="Vaysberg M."/>
            <person name="Wallender E.K."/>
            <person name="Wong C."/>
            <person name="Yamamura Y."/>
            <person name="Yuan S."/>
            <person name="Shinozaki K."/>
            <person name="Davis R.W."/>
            <person name="Theologis A."/>
            <person name="Ecker J.R."/>
        </authorList>
    </citation>
    <scope>NUCLEOTIDE SEQUENCE [LARGE SCALE MRNA]</scope>
    <source>
        <strain>cv. Columbia</strain>
    </source>
</reference>
<reference key="5">
    <citation type="submission" date="2002-03" db="EMBL/GenBank/DDBJ databases">
        <title>Full-length cDNA from Arabidopsis thaliana.</title>
        <authorList>
            <person name="Brover V.V."/>
            <person name="Troukhan M.E."/>
            <person name="Alexandrov N.A."/>
            <person name="Lu Y.-P."/>
            <person name="Flavell R.B."/>
            <person name="Feldmann K.A."/>
        </authorList>
    </citation>
    <scope>NUCLEOTIDE SEQUENCE [LARGE SCALE MRNA]</scope>
</reference>
<dbReference type="EMBL" id="AF053303">
    <property type="protein sequence ID" value="AAC08575.1"/>
    <property type="molecule type" value="mRNA"/>
</dbReference>
<dbReference type="EMBL" id="AF080118">
    <property type="protein sequence ID" value="AAC33951.1"/>
    <property type="molecule type" value="Genomic_DNA"/>
</dbReference>
<dbReference type="EMBL" id="AL049525">
    <property type="protein sequence ID" value="CAB40060.1"/>
    <property type="molecule type" value="Genomic_DNA"/>
</dbReference>
<dbReference type="EMBL" id="AL161518">
    <property type="protein sequence ID" value="CAB81193.1"/>
    <property type="molecule type" value="Genomic_DNA"/>
</dbReference>
<dbReference type="EMBL" id="CP002687">
    <property type="protein sequence ID" value="AEE82943.1"/>
    <property type="molecule type" value="Genomic_DNA"/>
</dbReference>
<dbReference type="EMBL" id="CP002687">
    <property type="protein sequence ID" value="AEE82944.1"/>
    <property type="molecule type" value="Genomic_DNA"/>
</dbReference>
<dbReference type="EMBL" id="AY085896">
    <property type="protein sequence ID" value="AAM63108.1"/>
    <property type="molecule type" value="mRNA"/>
</dbReference>
<dbReference type="EMBL" id="BT005847">
    <property type="protein sequence ID" value="AAO64782.1"/>
    <property type="molecule type" value="mRNA"/>
</dbReference>
<dbReference type="PIR" id="T52114">
    <property type="entry name" value="T52114"/>
</dbReference>
<dbReference type="RefSeq" id="NP_001078372.1">
    <property type="nucleotide sequence ID" value="NM_001084903.1"/>
</dbReference>
<dbReference type="RefSeq" id="NP_192830.1">
    <property type="nucleotide sequence ID" value="NM_117160.4"/>
</dbReference>
<dbReference type="SMR" id="O65155"/>
<dbReference type="BioGRID" id="11989">
    <property type="interactions" value="7"/>
</dbReference>
<dbReference type="FunCoup" id="O65155">
    <property type="interactions" value="1415"/>
</dbReference>
<dbReference type="IntAct" id="O65155">
    <property type="interactions" value="5"/>
</dbReference>
<dbReference type="STRING" id="3702.O65155"/>
<dbReference type="iPTMnet" id="O65155"/>
<dbReference type="PaxDb" id="3702-AT4G10920.2"/>
<dbReference type="ProteomicsDB" id="250687"/>
<dbReference type="DNASU" id="826690"/>
<dbReference type="EnsemblPlants" id="AT4G10920.1">
    <property type="protein sequence ID" value="AT4G10920.1"/>
    <property type="gene ID" value="AT4G10920"/>
</dbReference>
<dbReference type="EnsemblPlants" id="AT4G10920.2">
    <property type="protein sequence ID" value="AT4G10920.2"/>
    <property type="gene ID" value="AT4G10920"/>
</dbReference>
<dbReference type="GeneID" id="826690"/>
<dbReference type="Gramene" id="AT4G10920.1">
    <property type="protein sequence ID" value="AT4G10920.1"/>
    <property type="gene ID" value="AT4G10920"/>
</dbReference>
<dbReference type="Gramene" id="AT4G10920.2">
    <property type="protein sequence ID" value="AT4G10920.2"/>
    <property type="gene ID" value="AT4G10920"/>
</dbReference>
<dbReference type="KEGG" id="ath:AT4G10920"/>
<dbReference type="Araport" id="AT4G10920"/>
<dbReference type="TAIR" id="AT4G10920">
    <property type="gene designation" value="KELP"/>
</dbReference>
<dbReference type="eggNOG" id="KOG2712">
    <property type="taxonomic scope" value="Eukaryota"/>
</dbReference>
<dbReference type="HOGENOM" id="CLU_094761_0_0_1"/>
<dbReference type="InParanoid" id="O65155"/>
<dbReference type="OMA" id="DEMTEYK"/>
<dbReference type="PhylomeDB" id="O65155"/>
<dbReference type="PRO" id="PR:O65155"/>
<dbReference type="Proteomes" id="UP000006548">
    <property type="component" value="Chromosome 4"/>
</dbReference>
<dbReference type="ExpressionAtlas" id="O65155">
    <property type="expression patterns" value="baseline and differential"/>
</dbReference>
<dbReference type="GO" id="GO:0005634">
    <property type="term" value="C:nucleus"/>
    <property type="evidence" value="ECO:0007669"/>
    <property type="project" value="UniProtKB-SubCell"/>
</dbReference>
<dbReference type="GO" id="GO:0003677">
    <property type="term" value="F:DNA binding"/>
    <property type="evidence" value="ECO:0007669"/>
    <property type="project" value="UniProtKB-KW"/>
</dbReference>
<dbReference type="GO" id="GO:0003713">
    <property type="term" value="F:transcription coactivator activity"/>
    <property type="evidence" value="ECO:0007669"/>
    <property type="project" value="InterPro"/>
</dbReference>
<dbReference type="GO" id="GO:0060261">
    <property type="term" value="P:positive regulation of transcription initiation by RNA polymerase II"/>
    <property type="evidence" value="ECO:0007669"/>
    <property type="project" value="InterPro"/>
</dbReference>
<dbReference type="FunFam" id="2.30.31.10:FF:000004">
    <property type="entry name" value="RNA polymerase II transcriptional coactivator KELP"/>
    <property type="match status" value="1"/>
</dbReference>
<dbReference type="Gene3D" id="1.10.10.60">
    <property type="entry name" value="Homeodomain-like"/>
    <property type="match status" value="1"/>
</dbReference>
<dbReference type="Gene3D" id="2.30.31.10">
    <property type="entry name" value="Transcriptional Coactivator Pc4, Chain A"/>
    <property type="match status" value="1"/>
</dbReference>
<dbReference type="InterPro" id="IPR014876">
    <property type="entry name" value="DEK_C"/>
</dbReference>
<dbReference type="InterPro" id="IPR017415">
    <property type="entry name" value="KELP"/>
</dbReference>
<dbReference type="InterPro" id="IPR003173">
    <property type="entry name" value="PC4_C"/>
</dbReference>
<dbReference type="InterPro" id="IPR009044">
    <property type="entry name" value="ssDNA-bd_transcriptional_reg"/>
</dbReference>
<dbReference type="InterPro" id="IPR045125">
    <property type="entry name" value="Sub1/Tcp4-like"/>
</dbReference>
<dbReference type="PANTHER" id="PTHR13215">
    <property type="entry name" value="RNA POLYMERASE II TRANSCRIPTIONAL COACTIVATOR"/>
    <property type="match status" value="1"/>
</dbReference>
<dbReference type="Pfam" id="PF08766">
    <property type="entry name" value="DEK_C"/>
    <property type="match status" value="1"/>
</dbReference>
<dbReference type="Pfam" id="PF02229">
    <property type="entry name" value="PC4"/>
    <property type="match status" value="1"/>
</dbReference>
<dbReference type="PIRSF" id="PIRSF038156">
    <property type="entry name" value="RNA_pol_II_KELP"/>
    <property type="match status" value="1"/>
</dbReference>
<dbReference type="SUPFAM" id="SSF109715">
    <property type="entry name" value="DEK C-terminal domain"/>
    <property type="match status" value="1"/>
</dbReference>
<dbReference type="SUPFAM" id="SSF54447">
    <property type="entry name" value="ssDNA-binding transcriptional regulator domain"/>
    <property type="match status" value="1"/>
</dbReference>
<dbReference type="PROSITE" id="PS51998">
    <property type="entry name" value="DEK_C"/>
    <property type="match status" value="1"/>
</dbReference>
<feature type="chain" id="PRO_0000215948" description="RNA polymerase II transcriptional coactivator KELP">
    <location>
        <begin position="1"/>
        <end position="165"/>
    </location>
</feature>
<feature type="domain" description="DEK-C" evidence="2">
    <location>
        <begin position="3"/>
        <end position="60"/>
    </location>
</feature>
<feature type="region of interest" description="Disordered" evidence="3">
    <location>
        <begin position="66"/>
        <end position="93"/>
    </location>
</feature>
<organism>
    <name type="scientific">Arabidopsis thaliana</name>
    <name type="common">Mouse-ear cress</name>
    <dbReference type="NCBI Taxonomy" id="3702"/>
    <lineage>
        <taxon>Eukaryota</taxon>
        <taxon>Viridiplantae</taxon>
        <taxon>Streptophyta</taxon>
        <taxon>Embryophyta</taxon>
        <taxon>Tracheophyta</taxon>
        <taxon>Spermatophyta</taxon>
        <taxon>Magnoliopsida</taxon>
        <taxon>eudicotyledons</taxon>
        <taxon>Gunneridae</taxon>
        <taxon>Pentapetalae</taxon>
        <taxon>rosids</taxon>
        <taxon>malvids</taxon>
        <taxon>Brassicales</taxon>
        <taxon>Brassicaceae</taxon>
        <taxon>Camelineae</taxon>
        <taxon>Arabidopsis</taxon>
    </lineage>
</organism>
<evidence type="ECO:0000250" key="1"/>
<evidence type="ECO:0000255" key="2">
    <source>
        <dbReference type="PROSITE-ProRule" id="PRU01342"/>
    </source>
</evidence>
<evidence type="ECO:0000256" key="3">
    <source>
        <dbReference type="SAM" id="MobiDB-lite"/>
    </source>
</evidence>
<evidence type="ECO:0000305" key="4"/>
<protein>
    <recommendedName>
        <fullName>RNA polymerase II transcriptional coactivator KELP</fullName>
    </recommendedName>
</protein>